<proteinExistence type="inferred from homology"/>
<protein>
    <recommendedName>
        <fullName evidence="1">tRNA-2-methylthio-N(6)-dimethylallyladenosine synthase</fullName>
        <ecNumber evidence="1">2.8.4.3</ecNumber>
    </recommendedName>
    <alternativeName>
        <fullName evidence="1">(Dimethylallyl)adenosine tRNA methylthiotransferase MiaB</fullName>
    </alternativeName>
    <alternativeName>
        <fullName evidence="1">tRNA-i(6)A37 methylthiotransferase</fullName>
    </alternativeName>
</protein>
<gene>
    <name evidence="1" type="primary">miaB</name>
    <name type="ordered locus">FRAAL5712</name>
</gene>
<reference key="1">
    <citation type="journal article" date="2007" name="Genome Res.">
        <title>Genome characteristics of facultatively symbiotic Frankia sp. strains reflect host range and host plant biogeography.</title>
        <authorList>
            <person name="Normand P."/>
            <person name="Lapierre P."/>
            <person name="Tisa L.S."/>
            <person name="Gogarten J.P."/>
            <person name="Alloisio N."/>
            <person name="Bagnarol E."/>
            <person name="Bassi C.A."/>
            <person name="Berry A.M."/>
            <person name="Bickhart D.M."/>
            <person name="Choisne N."/>
            <person name="Couloux A."/>
            <person name="Cournoyer B."/>
            <person name="Cruveiller S."/>
            <person name="Daubin V."/>
            <person name="Demange N."/>
            <person name="Francino M.P."/>
            <person name="Goltsman E."/>
            <person name="Huang Y."/>
            <person name="Kopp O.R."/>
            <person name="Labarre L."/>
            <person name="Lapidus A."/>
            <person name="Lavire C."/>
            <person name="Marechal J."/>
            <person name="Martinez M."/>
            <person name="Mastronunzio J.E."/>
            <person name="Mullin B.C."/>
            <person name="Niemann J."/>
            <person name="Pujic P."/>
            <person name="Rawnsley T."/>
            <person name="Rouy Z."/>
            <person name="Schenowitz C."/>
            <person name="Sellstedt A."/>
            <person name="Tavares F."/>
            <person name="Tomkins J.P."/>
            <person name="Vallenet D."/>
            <person name="Valverde C."/>
            <person name="Wall L.G."/>
            <person name="Wang Y."/>
            <person name="Medigue C."/>
            <person name="Benson D.R."/>
        </authorList>
    </citation>
    <scope>NUCLEOTIDE SEQUENCE [LARGE SCALE GENOMIC DNA]</scope>
    <source>
        <strain>DSM 45986 / CECT 9034 / ACN14a</strain>
    </source>
</reference>
<comment type="function">
    <text evidence="1">Catalyzes the methylthiolation of N6-(dimethylallyl)adenosine (i(6)A), leading to the formation of 2-methylthio-N6-(dimethylallyl)adenosine (ms(2)i(6)A) at position 37 in tRNAs that read codons beginning with uridine.</text>
</comment>
<comment type="catalytic activity">
    <reaction evidence="1">
        <text>N(6)-dimethylallyladenosine(37) in tRNA + (sulfur carrier)-SH + AH2 + 2 S-adenosyl-L-methionine = 2-methylsulfanyl-N(6)-dimethylallyladenosine(37) in tRNA + (sulfur carrier)-H + 5'-deoxyadenosine + L-methionine + A + S-adenosyl-L-homocysteine + 2 H(+)</text>
        <dbReference type="Rhea" id="RHEA:37067"/>
        <dbReference type="Rhea" id="RHEA-COMP:10375"/>
        <dbReference type="Rhea" id="RHEA-COMP:10376"/>
        <dbReference type="Rhea" id="RHEA-COMP:14737"/>
        <dbReference type="Rhea" id="RHEA-COMP:14739"/>
        <dbReference type="ChEBI" id="CHEBI:13193"/>
        <dbReference type="ChEBI" id="CHEBI:15378"/>
        <dbReference type="ChEBI" id="CHEBI:17319"/>
        <dbReference type="ChEBI" id="CHEBI:17499"/>
        <dbReference type="ChEBI" id="CHEBI:29917"/>
        <dbReference type="ChEBI" id="CHEBI:57844"/>
        <dbReference type="ChEBI" id="CHEBI:57856"/>
        <dbReference type="ChEBI" id="CHEBI:59789"/>
        <dbReference type="ChEBI" id="CHEBI:64428"/>
        <dbReference type="ChEBI" id="CHEBI:74415"/>
        <dbReference type="ChEBI" id="CHEBI:74417"/>
        <dbReference type="EC" id="2.8.4.3"/>
    </reaction>
</comment>
<comment type="cofactor">
    <cofactor evidence="1">
        <name>[4Fe-4S] cluster</name>
        <dbReference type="ChEBI" id="CHEBI:49883"/>
    </cofactor>
    <text evidence="1">Binds 2 [4Fe-4S] clusters. One cluster is coordinated with 3 cysteines and an exchangeable S-adenosyl-L-methionine.</text>
</comment>
<comment type="subunit">
    <text evidence="1">Monomer.</text>
</comment>
<comment type="subcellular location">
    <subcellularLocation>
        <location evidence="1">Cytoplasm</location>
    </subcellularLocation>
</comment>
<comment type="similarity">
    <text evidence="1">Belongs to the methylthiotransferase family. MiaB subfamily.</text>
</comment>
<feature type="chain" id="PRO_0000374311" description="tRNA-2-methylthio-N(6)-dimethylallyladenosine synthase">
    <location>
        <begin position="1"/>
        <end position="497"/>
    </location>
</feature>
<feature type="domain" description="MTTase N-terminal" evidence="1">
    <location>
        <begin position="4"/>
        <end position="120"/>
    </location>
</feature>
<feature type="domain" description="Radical SAM core" evidence="2">
    <location>
        <begin position="143"/>
        <end position="374"/>
    </location>
</feature>
<feature type="domain" description="TRAM" evidence="1">
    <location>
        <begin position="376"/>
        <end position="445"/>
    </location>
</feature>
<feature type="binding site" evidence="1">
    <location>
        <position position="13"/>
    </location>
    <ligand>
        <name>[4Fe-4S] cluster</name>
        <dbReference type="ChEBI" id="CHEBI:49883"/>
        <label>1</label>
    </ligand>
</feature>
<feature type="binding site" evidence="1">
    <location>
        <position position="49"/>
    </location>
    <ligand>
        <name>[4Fe-4S] cluster</name>
        <dbReference type="ChEBI" id="CHEBI:49883"/>
        <label>1</label>
    </ligand>
</feature>
<feature type="binding site" evidence="1">
    <location>
        <position position="83"/>
    </location>
    <ligand>
        <name>[4Fe-4S] cluster</name>
        <dbReference type="ChEBI" id="CHEBI:49883"/>
        <label>1</label>
    </ligand>
</feature>
<feature type="binding site" evidence="1">
    <location>
        <position position="157"/>
    </location>
    <ligand>
        <name>[4Fe-4S] cluster</name>
        <dbReference type="ChEBI" id="CHEBI:49883"/>
        <label>2</label>
        <note>4Fe-4S-S-AdoMet</note>
    </ligand>
</feature>
<feature type="binding site" evidence="1">
    <location>
        <position position="161"/>
    </location>
    <ligand>
        <name>[4Fe-4S] cluster</name>
        <dbReference type="ChEBI" id="CHEBI:49883"/>
        <label>2</label>
        <note>4Fe-4S-S-AdoMet</note>
    </ligand>
</feature>
<feature type="binding site" evidence="1">
    <location>
        <position position="164"/>
    </location>
    <ligand>
        <name>[4Fe-4S] cluster</name>
        <dbReference type="ChEBI" id="CHEBI:49883"/>
        <label>2</label>
        <note>4Fe-4S-S-AdoMet</note>
    </ligand>
</feature>
<sequence length="497" mass="53641">MTGRSYEVRTFGCQMNVHDSERLSGLLESAGYVPAPPGSEADVVVFNTCAVRENADNRLYGNLGQLVPVKKGHPGMQIAVGGCLAQKDRSTILDRAPWVDVVFGTHNLHRLPVLLERARHNAAAELEIAEALEVFPSSLPTRRASHHSAWVSISVGCDNTCTFCIVPSLRGRERDRRPGDVLAEVEALVGEGALEITLLGQNVNSYGRSLGDPGAFAKLLLACGRVDGLERVRFTSPHPRDFTDDVIEAMAATPNVCHQLHMPLQSGSDDVLRRMRRSYRRDRFLGIVERVRAAMPDAAITTDIIVGFPGETEADFADTLDVVRQARFAGAFTFQYSPRPGTPAATMDGQIDRTTVAERYARLVALQDEVSWAQNRELVGRRVELLVAEGEGRKDDATGRLSGRARDGRLVHFRAGAGLAARPGDVVETVVTRAAPHHLTADGPLLSHRRTRAGDAWELARTAPVPAAGDGAGTTAARQTVALGMPSVGPAPSPGRR</sequence>
<name>MIAB_FRAAA</name>
<accession>Q0RDX2</accession>
<evidence type="ECO:0000255" key="1">
    <source>
        <dbReference type="HAMAP-Rule" id="MF_01864"/>
    </source>
</evidence>
<evidence type="ECO:0000255" key="2">
    <source>
        <dbReference type="PROSITE-ProRule" id="PRU01266"/>
    </source>
</evidence>
<keyword id="KW-0004">4Fe-4S</keyword>
<keyword id="KW-0963">Cytoplasm</keyword>
<keyword id="KW-0408">Iron</keyword>
<keyword id="KW-0411">Iron-sulfur</keyword>
<keyword id="KW-0479">Metal-binding</keyword>
<keyword id="KW-1185">Reference proteome</keyword>
<keyword id="KW-0949">S-adenosyl-L-methionine</keyword>
<keyword id="KW-0808">Transferase</keyword>
<keyword id="KW-0819">tRNA processing</keyword>
<dbReference type="EC" id="2.8.4.3" evidence="1"/>
<dbReference type="EMBL" id="CT573213">
    <property type="protein sequence ID" value="CAJ64344.1"/>
    <property type="molecule type" value="Genomic_DNA"/>
</dbReference>
<dbReference type="RefSeq" id="WP_011606786.1">
    <property type="nucleotide sequence ID" value="NC_008278.1"/>
</dbReference>
<dbReference type="SMR" id="Q0RDX2"/>
<dbReference type="STRING" id="326424.FRAAL5712"/>
<dbReference type="KEGG" id="fal:FRAAL5712"/>
<dbReference type="eggNOG" id="COG0621">
    <property type="taxonomic scope" value="Bacteria"/>
</dbReference>
<dbReference type="HOGENOM" id="CLU_018697_2_2_11"/>
<dbReference type="OrthoDB" id="9805215at2"/>
<dbReference type="Proteomes" id="UP000000657">
    <property type="component" value="Chromosome"/>
</dbReference>
<dbReference type="GO" id="GO:0005829">
    <property type="term" value="C:cytosol"/>
    <property type="evidence" value="ECO:0007669"/>
    <property type="project" value="TreeGrafter"/>
</dbReference>
<dbReference type="GO" id="GO:0051539">
    <property type="term" value="F:4 iron, 4 sulfur cluster binding"/>
    <property type="evidence" value="ECO:0007669"/>
    <property type="project" value="UniProtKB-UniRule"/>
</dbReference>
<dbReference type="GO" id="GO:0046872">
    <property type="term" value="F:metal ion binding"/>
    <property type="evidence" value="ECO:0007669"/>
    <property type="project" value="UniProtKB-KW"/>
</dbReference>
<dbReference type="GO" id="GO:0035597">
    <property type="term" value="F:N6-isopentenyladenosine methylthiotransferase activity"/>
    <property type="evidence" value="ECO:0007669"/>
    <property type="project" value="TreeGrafter"/>
</dbReference>
<dbReference type="CDD" id="cd01335">
    <property type="entry name" value="Radical_SAM"/>
    <property type="match status" value="1"/>
</dbReference>
<dbReference type="FunFam" id="3.40.50.12160:FF:000003">
    <property type="entry name" value="CDK5 regulatory subunit-associated protein 1"/>
    <property type="match status" value="1"/>
</dbReference>
<dbReference type="FunFam" id="3.80.30.20:FF:000001">
    <property type="entry name" value="tRNA-2-methylthio-N(6)-dimethylallyladenosine synthase 2"/>
    <property type="match status" value="1"/>
</dbReference>
<dbReference type="Gene3D" id="3.40.50.12160">
    <property type="entry name" value="Methylthiotransferase, N-terminal domain"/>
    <property type="match status" value="1"/>
</dbReference>
<dbReference type="Gene3D" id="3.80.30.20">
    <property type="entry name" value="tm_1862 like domain"/>
    <property type="match status" value="1"/>
</dbReference>
<dbReference type="HAMAP" id="MF_01864">
    <property type="entry name" value="tRNA_metthiotr_MiaB"/>
    <property type="match status" value="1"/>
</dbReference>
<dbReference type="InterPro" id="IPR006638">
    <property type="entry name" value="Elp3/MiaA/NifB-like_rSAM"/>
</dbReference>
<dbReference type="InterPro" id="IPR005839">
    <property type="entry name" value="Methylthiotransferase"/>
</dbReference>
<dbReference type="InterPro" id="IPR020612">
    <property type="entry name" value="Methylthiotransferase_CS"/>
</dbReference>
<dbReference type="InterPro" id="IPR013848">
    <property type="entry name" value="Methylthiotransferase_N"/>
</dbReference>
<dbReference type="InterPro" id="IPR038135">
    <property type="entry name" value="Methylthiotransferase_N_sf"/>
</dbReference>
<dbReference type="InterPro" id="IPR006463">
    <property type="entry name" value="MiaB_methiolase"/>
</dbReference>
<dbReference type="InterPro" id="IPR007197">
    <property type="entry name" value="rSAM"/>
</dbReference>
<dbReference type="InterPro" id="IPR023404">
    <property type="entry name" value="rSAM_horseshoe"/>
</dbReference>
<dbReference type="InterPro" id="IPR002792">
    <property type="entry name" value="TRAM_dom"/>
</dbReference>
<dbReference type="NCBIfam" id="TIGR01574">
    <property type="entry name" value="miaB-methiolase"/>
    <property type="match status" value="1"/>
</dbReference>
<dbReference type="NCBIfam" id="TIGR00089">
    <property type="entry name" value="MiaB/RimO family radical SAM methylthiotransferase"/>
    <property type="match status" value="1"/>
</dbReference>
<dbReference type="PANTHER" id="PTHR43020">
    <property type="entry name" value="CDK5 REGULATORY SUBUNIT-ASSOCIATED PROTEIN 1"/>
    <property type="match status" value="1"/>
</dbReference>
<dbReference type="PANTHER" id="PTHR43020:SF2">
    <property type="entry name" value="MITOCHONDRIAL TRNA METHYLTHIOTRANSFERASE CDK5RAP1"/>
    <property type="match status" value="1"/>
</dbReference>
<dbReference type="Pfam" id="PF04055">
    <property type="entry name" value="Radical_SAM"/>
    <property type="match status" value="1"/>
</dbReference>
<dbReference type="Pfam" id="PF00919">
    <property type="entry name" value="UPF0004"/>
    <property type="match status" value="1"/>
</dbReference>
<dbReference type="SFLD" id="SFLDF00273">
    <property type="entry name" value="(dimethylallyl)adenosine_tRNA"/>
    <property type="match status" value="1"/>
</dbReference>
<dbReference type="SFLD" id="SFLDG01082">
    <property type="entry name" value="B12-binding_domain_containing"/>
    <property type="match status" value="1"/>
</dbReference>
<dbReference type="SFLD" id="SFLDG01061">
    <property type="entry name" value="methylthiotransferase"/>
    <property type="match status" value="1"/>
</dbReference>
<dbReference type="SMART" id="SM00729">
    <property type="entry name" value="Elp3"/>
    <property type="match status" value="1"/>
</dbReference>
<dbReference type="SUPFAM" id="SSF102114">
    <property type="entry name" value="Radical SAM enzymes"/>
    <property type="match status" value="1"/>
</dbReference>
<dbReference type="PROSITE" id="PS51449">
    <property type="entry name" value="MTTASE_N"/>
    <property type="match status" value="1"/>
</dbReference>
<dbReference type="PROSITE" id="PS01278">
    <property type="entry name" value="MTTASE_RADICAL"/>
    <property type="match status" value="1"/>
</dbReference>
<dbReference type="PROSITE" id="PS51918">
    <property type="entry name" value="RADICAL_SAM"/>
    <property type="match status" value="1"/>
</dbReference>
<dbReference type="PROSITE" id="PS50926">
    <property type="entry name" value="TRAM"/>
    <property type="match status" value="1"/>
</dbReference>
<organism>
    <name type="scientific">Frankia alni (strain DSM 45986 / CECT 9034 / ACN14a)</name>
    <dbReference type="NCBI Taxonomy" id="326424"/>
    <lineage>
        <taxon>Bacteria</taxon>
        <taxon>Bacillati</taxon>
        <taxon>Actinomycetota</taxon>
        <taxon>Actinomycetes</taxon>
        <taxon>Frankiales</taxon>
        <taxon>Frankiaceae</taxon>
        <taxon>Frankia</taxon>
    </lineage>
</organism>